<name>TX22F_PLETR</name>
<comment type="function">
    <text>Potent toxin that may paralyze and/or kill insect pests such as H.virescens (lepidoptera), S.exigua (beet armyworm) and M.sexta (tobacco hornworm).</text>
</comment>
<comment type="subcellular location">
    <subcellularLocation>
        <location evidence="2">Secreted</location>
    </subcellularLocation>
</comment>
<comment type="tissue specificity">
    <text evidence="4">Expressed by the venom gland.</text>
</comment>
<comment type="domain">
    <text evidence="3">The presence of a 'disulfide through disulfide knot' structurally defines this protein as a knottin.</text>
</comment>
<comment type="similarity">
    <text evidence="3">Belongs to the neurotoxin 02 (plectoxin) family. 02 (plectoxin) subfamily.</text>
</comment>
<reference key="1">
    <citation type="journal article" date="1994" name="J. Biol. Chem.">
        <title>Isolation and sequencing of insecticidal peptides from the primitive hunting spider, Plectreurys tristis (Simon).</title>
        <authorList>
            <person name="Quistad G.B."/>
            <person name="Skinner W.S."/>
        </authorList>
    </citation>
    <scope>PROTEIN SEQUENCE</scope>
    <scope>SUBCELLULAR LOCATION</scope>
    <source>
        <tissue>Venom</tissue>
    </source>
</reference>
<protein>
    <recommendedName>
        <fullName evidence="3">U1-plectoxin-Pt1f</fullName>
        <shortName evidence="3">U1-PLTX-Pt1f</shortName>
    </recommendedName>
    <alternativeName>
        <fullName>Plectoxin XIV</fullName>
        <shortName>PLT-XIV</shortName>
        <shortName>PLTXIV</shortName>
    </alternativeName>
    <alternativeName>
        <fullName>Plectoxin-14</fullName>
    </alternativeName>
</protein>
<organism>
    <name type="scientific">Plectreurys tristis</name>
    <name type="common">Spider</name>
    <name type="synonym">Plectreurys bispinosus</name>
    <dbReference type="NCBI Taxonomy" id="33319"/>
    <lineage>
        <taxon>Eukaryota</taxon>
        <taxon>Metazoa</taxon>
        <taxon>Ecdysozoa</taxon>
        <taxon>Arthropoda</taxon>
        <taxon>Chelicerata</taxon>
        <taxon>Arachnida</taxon>
        <taxon>Araneae</taxon>
        <taxon>Araneomorphae</taxon>
        <taxon>Haplogynae</taxon>
        <taxon>Pholcoidea</taxon>
        <taxon>Plectreuridae</taxon>
        <taxon>Plectreurys</taxon>
    </lineage>
</organism>
<dbReference type="PIR" id="F53613">
    <property type="entry name" value="F53613"/>
</dbReference>
<dbReference type="SMR" id="P36988"/>
<dbReference type="ArachnoServer" id="AS000395">
    <property type="toxin name" value="U1-plectoxin-Pt1f"/>
</dbReference>
<dbReference type="GO" id="GO:0005576">
    <property type="term" value="C:extracellular region"/>
    <property type="evidence" value="ECO:0007669"/>
    <property type="project" value="UniProtKB-SubCell"/>
</dbReference>
<dbReference type="GO" id="GO:0008200">
    <property type="term" value="F:ion channel inhibitor activity"/>
    <property type="evidence" value="ECO:0007669"/>
    <property type="project" value="InterPro"/>
</dbReference>
<dbReference type="GO" id="GO:0005102">
    <property type="term" value="F:signaling receptor binding"/>
    <property type="evidence" value="ECO:0007669"/>
    <property type="project" value="InterPro"/>
</dbReference>
<dbReference type="GO" id="GO:0090729">
    <property type="term" value="F:toxin activity"/>
    <property type="evidence" value="ECO:0007669"/>
    <property type="project" value="UniProtKB-KW"/>
</dbReference>
<dbReference type="InterPro" id="IPR036836">
    <property type="entry name" value="Agouti_dom_sf"/>
</dbReference>
<dbReference type="InterPro" id="IPR004169">
    <property type="entry name" value="Spidertoxin"/>
</dbReference>
<dbReference type="Pfam" id="PF02819">
    <property type="entry name" value="Toxin_9"/>
    <property type="match status" value="1"/>
</dbReference>
<dbReference type="SUPFAM" id="SSF57055">
    <property type="entry name" value="Agouti-related protein"/>
    <property type="match status" value="1"/>
</dbReference>
<proteinExistence type="evidence at protein level"/>
<evidence type="ECO:0000250" key="1">
    <source>
        <dbReference type="UniProtKB" id="P83559"/>
    </source>
</evidence>
<evidence type="ECO:0000269" key="2">
    <source>
    </source>
</evidence>
<evidence type="ECO:0000305" key="3"/>
<evidence type="ECO:0000305" key="4">
    <source>
    </source>
</evidence>
<sequence length="46" mass="4999">AVKCIGWQETCNGKLPCCDGCVMCECNIMGQNCRCNHPKATSECES</sequence>
<keyword id="KW-0903">Direct protein sequencing</keyword>
<keyword id="KW-1015">Disulfide bond</keyword>
<keyword id="KW-0960">Knottin</keyword>
<keyword id="KW-0528">Neurotoxin</keyword>
<keyword id="KW-0964">Secreted</keyword>
<keyword id="KW-0800">Toxin</keyword>
<accession>P36988</accession>
<feature type="chain" id="PRO_0000087660" description="U1-plectoxin-Pt1f" evidence="2">
    <location>
        <begin position="1"/>
        <end position="46"/>
    </location>
</feature>
<feature type="disulfide bond" evidence="1">
    <location>
        <begin position="4"/>
        <end position="18"/>
    </location>
</feature>
<feature type="disulfide bond" evidence="1">
    <location>
        <begin position="11"/>
        <end position="24"/>
    </location>
</feature>
<feature type="disulfide bond" evidence="1">
    <location>
        <begin position="17"/>
        <end position="35"/>
    </location>
</feature>
<feature type="disulfide bond" evidence="1">
    <location>
        <begin position="21"/>
        <end position="44"/>
    </location>
</feature>
<feature type="disulfide bond" evidence="1">
    <location>
        <begin position="26"/>
        <end position="33"/>
    </location>
</feature>